<protein>
    <recommendedName>
        <fullName>Thyroid peroxidase</fullName>
        <shortName>TPO</shortName>
        <ecNumber evidence="2">1.11.1.8</ecNumber>
    </recommendedName>
</protein>
<feature type="signal peptide" evidence="3">
    <location>
        <begin position="1"/>
        <end position="31"/>
    </location>
</feature>
<feature type="chain" id="PRO_0000023663" description="Thyroid peroxidase">
    <location>
        <begin position="32"/>
        <end position="914"/>
    </location>
</feature>
<feature type="topological domain" description="Extracellular" evidence="3">
    <location>
        <begin position="32"/>
        <end position="834"/>
    </location>
</feature>
<feature type="transmembrane region" description="Helical" evidence="3">
    <location>
        <begin position="835"/>
        <end position="859"/>
    </location>
</feature>
<feature type="topological domain" description="Cytoplasmic" evidence="3">
    <location>
        <begin position="860"/>
        <end position="914"/>
    </location>
</feature>
<feature type="domain" description="Sushi" evidence="6">
    <location>
        <begin position="728"/>
        <end position="783"/>
    </location>
</feature>
<feature type="domain" description="EGF-like; calcium-binding" evidence="4">
    <location>
        <begin position="784"/>
        <end position="827"/>
    </location>
</feature>
<feature type="region of interest" description="Disordered" evidence="7">
    <location>
        <begin position="881"/>
        <end position="909"/>
    </location>
</feature>
<feature type="active site" description="Proton acceptor" evidence="5">
    <location>
        <position position="233"/>
    </location>
</feature>
<feature type="binding site" description="covalent" evidence="1">
    <location>
        <position position="232"/>
    </location>
    <ligand>
        <name>heme b</name>
        <dbReference type="ChEBI" id="CHEBI:60344"/>
    </ligand>
</feature>
<feature type="binding site" evidence="5">
    <location>
        <position position="234"/>
    </location>
    <ligand>
        <name>Ca(2+)</name>
        <dbReference type="ChEBI" id="CHEBI:29108"/>
    </ligand>
</feature>
<feature type="binding site" evidence="5">
    <location>
        <position position="313"/>
    </location>
    <ligand>
        <name>Ca(2+)</name>
        <dbReference type="ChEBI" id="CHEBI:29108"/>
    </ligand>
</feature>
<feature type="binding site" evidence="5">
    <location>
        <position position="315"/>
    </location>
    <ligand>
        <name>Ca(2+)</name>
        <dbReference type="ChEBI" id="CHEBI:29108"/>
    </ligand>
</feature>
<feature type="binding site" evidence="5">
    <location>
        <position position="317"/>
    </location>
    <ligand>
        <name>Ca(2+)</name>
        <dbReference type="ChEBI" id="CHEBI:29108"/>
    </ligand>
</feature>
<feature type="binding site" evidence="5">
    <location>
        <position position="319"/>
    </location>
    <ligand>
        <name>Ca(2+)</name>
        <dbReference type="ChEBI" id="CHEBI:29108"/>
    </ligand>
</feature>
<feature type="binding site" description="covalent" evidence="1">
    <location>
        <position position="387"/>
    </location>
    <ligand>
        <name>heme b</name>
        <dbReference type="ChEBI" id="CHEBI:60344"/>
    </ligand>
</feature>
<feature type="binding site" description="axial binding residue" evidence="5">
    <location>
        <position position="482"/>
    </location>
    <ligand>
        <name>heme b</name>
        <dbReference type="ChEBI" id="CHEBI:60344"/>
    </ligand>
    <ligandPart>
        <name>Fe</name>
        <dbReference type="ChEBI" id="CHEBI:18248"/>
    </ligandPart>
</feature>
<feature type="site" description="Transition state stabilizer" evidence="5">
    <location>
        <position position="384"/>
    </location>
</feature>
<feature type="glycosylation site" description="N-linked (GlcNAc...) asparagine" evidence="3">
    <location>
        <position position="123"/>
    </location>
</feature>
<feature type="glycosylation site" description="N-linked (GlcNAc...) asparagine" evidence="3">
    <location>
        <position position="271"/>
    </location>
</feature>
<feature type="glycosylation site" description="N-linked (GlcNAc...) asparagine" evidence="3">
    <location>
        <position position="299"/>
    </location>
</feature>
<feature type="glycosylation site" description="N-linked (GlcNAc...) asparagine" evidence="3">
    <location>
        <position position="334"/>
    </location>
</feature>
<feature type="glycosylation site" description="N-linked (GlcNAc...) asparagine" evidence="3">
    <location>
        <position position="603"/>
    </location>
</feature>
<feature type="disulfide bond" evidence="1">
    <location>
        <begin position="136"/>
        <end position="152"/>
    </location>
</feature>
<feature type="disulfide bond" evidence="1">
    <location>
        <begin position="253"/>
        <end position="263"/>
    </location>
</feature>
<feature type="disulfide bond" evidence="1">
    <location>
        <begin position="257"/>
        <end position="278"/>
    </location>
</feature>
<feature type="disulfide bond" evidence="1">
    <location>
        <begin position="586"/>
        <end position="643"/>
    </location>
</feature>
<feature type="disulfide bond" evidence="1">
    <location>
        <begin position="684"/>
        <end position="709"/>
    </location>
</feature>
<feature type="disulfide bond" evidence="1">
    <location>
        <begin position="730"/>
        <end position="770"/>
    </location>
</feature>
<feature type="disulfide bond" evidence="1">
    <location>
        <begin position="756"/>
        <end position="782"/>
    </location>
</feature>
<feature type="disulfide bond" evidence="1">
    <location>
        <begin position="788"/>
        <end position="802"/>
    </location>
</feature>
<feature type="disulfide bond" evidence="1">
    <location>
        <begin position="796"/>
        <end position="811"/>
    </location>
</feature>
<feature type="disulfide bond" evidence="1">
    <location>
        <begin position="813"/>
        <end position="826"/>
    </location>
</feature>
<feature type="sequence conflict" description="In Ref. 2; BAC33171." evidence="8" ref="2">
    <original>Y</original>
    <variation>H</variation>
    <location>
        <position position="614"/>
    </location>
</feature>
<evidence type="ECO:0000250" key="1"/>
<evidence type="ECO:0000250" key="2">
    <source>
        <dbReference type="UniProtKB" id="P09933"/>
    </source>
</evidence>
<evidence type="ECO:0000255" key="3"/>
<evidence type="ECO:0000255" key="4">
    <source>
        <dbReference type="PROSITE-ProRule" id="PRU00076"/>
    </source>
</evidence>
<evidence type="ECO:0000255" key="5">
    <source>
        <dbReference type="PROSITE-ProRule" id="PRU00298"/>
    </source>
</evidence>
<evidence type="ECO:0000255" key="6">
    <source>
        <dbReference type="PROSITE-ProRule" id="PRU00302"/>
    </source>
</evidence>
<evidence type="ECO:0000256" key="7">
    <source>
        <dbReference type="SAM" id="MobiDB-lite"/>
    </source>
</evidence>
<evidence type="ECO:0000305" key="8"/>
<proteinExistence type="evidence at transcript level"/>
<comment type="function">
    <text evidence="2">Iodination and coupling of the hormonogenic tyrosines in thyroglobulin to yield the thyroid hormones T(3) and T(4).</text>
</comment>
<comment type="catalytic activity">
    <reaction evidence="2">
        <text>2 iodide + H2O2 + 2 H(+) = diiodine + 2 H2O</text>
        <dbReference type="Rhea" id="RHEA:23336"/>
        <dbReference type="ChEBI" id="CHEBI:15377"/>
        <dbReference type="ChEBI" id="CHEBI:15378"/>
        <dbReference type="ChEBI" id="CHEBI:16240"/>
        <dbReference type="ChEBI" id="CHEBI:16382"/>
        <dbReference type="ChEBI" id="CHEBI:17606"/>
        <dbReference type="EC" id="1.11.1.8"/>
    </reaction>
</comment>
<comment type="catalytic activity">
    <reaction evidence="2">
        <text>[thyroglobulin]-L-tyrosine + iodide + H2O2 + H(+) = [thyroglobulin]-3-iodo-L-tyrosine + 2 H2O</text>
        <dbReference type="Rhea" id="RHEA:48956"/>
        <dbReference type="Rhea" id="RHEA-COMP:12274"/>
        <dbReference type="Rhea" id="RHEA-COMP:12275"/>
        <dbReference type="ChEBI" id="CHEBI:15377"/>
        <dbReference type="ChEBI" id="CHEBI:15378"/>
        <dbReference type="ChEBI" id="CHEBI:16240"/>
        <dbReference type="ChEBI" id="CHEBI:16382"/>
        <dbReference type="ChEBI" id="CHEBI:46858"/>
        <dbReference type="ChEBI" id="CHEBI:90870"/>
        <dbReference type="EC" id="1.11.1.8"/>
    </reaction>
</comment>
<comment type="catalytic activity">
    <reaction evidence="2">
        <text>[thyroglobulin]-3-iodo-L-tyrosine + iodide + H2O2 + H(+) = [thyroglobulin]-3,5-diiodo-L-tyrosine + 2 H2O</text>
        <dbReference type="Rhea" id="RHEA:48960"/>
        <dbReference type="Rhea" id="RHEA-COMP:12275"/>
        <dbReference type="Rhea" id="RHEA-COMP:12276"/>
        <dbReference type="ChEBI" id="CHEBI:15377"/>
        <dbReference type="ChEBI" id="CHEBI:15378"/>
        <dbReference type="ChEBI" id="CHEBI:16240"/>
        <dbReference type="ChEBI" id="CHEBI:16382"/>
        <dbReference type="ChEBI" id="CHEBI:90870"/>
        <dbReference type="ChEBI" id="CHEBI:90871"/>
        <dbReference type="EC" id="1.11.1.8"/>
    </reaction>
</comment>
<comment type="catalytic activity">
    <reaction evidence="2">
        <text>2 [thyroglobulin]-3,5-diiodo-L-tyrosine + H2O2 = [thyroglobulin]-L-thyroxine + [thyroglobulin]-dehydroalanine + 2 H2O</text>
        <dbReference type="Rhea" id="RHEA:48964"/>
        <dbReference type="Rhea" id="RHEA-COMP:12276"/>
        <dbReference type="Rhea" id="RHEA-COMP:12277"/>
        <dbReference type="Rhea" id="RHEA-COMP:12278"/>
        <dbReference type="ChEBI" id="CHEBI:15377"/>
        <dbReference type="ChEBI" id="CHEBI:16240"/>
        <dbReference type="ChEBI" id="CHEBI:90871"/>
        <dbReference type="ChEBI" id="CHEBI:90872"/>
        <dbReference type="ChEBI" id="CHEBI:90873"/>
        <dbReference type="EC" id="1.11.1.8"/>
    </reaction>
</comment>
<comment type="catalytic activity">
    <reaction evidence="2">
        <text>[thyroglobulin]-3-iodo-L-tyrosine + [thyroglobulin]-3,5-diiodo-L-tyrosine + H2O2 = [thyroglobulin]-3,3',5-triiodo-L-thyronine + [thyroglobulin]-dehydroalanine + 2 H2O</text>
        <dbReference type="Rhea" id="RHEA:48968"/>
        <dbReference type="Rhea" id="RHEA-COMP:12275"/>
        <dbReference type="Rhea" id="RHEA-COMP:12276"/>
        <dbReference type="Rhea" id="RHEA-COMP:12278"/>
        <dbReference type="Rhea" id="RHEA-COMP:12279"/>
        <dbReference type="ChEBI" id="CHEBI:15377"/>
        <dbReference type="ChEBI" id="CHEBI:16240"/>
        <dbReference type="ChEBI" id="CHEBI:90870"/>
        <dbReference type="ChEBI" id="CHEBI:90871"/>
        <dbReference type="ChEBI" id="CHEBI:90873"/>
        <dbReference type="ChEBI" id="CHEBI:90874"/>
        <dbReference type="EC" id="1.11.1.8"/>
    </reaction>
</comment>
<comment type="cofactor">
    <cofactor evidence="5">
        <name>Ca(2+)</name>
        <dbReference type="ChEBI" id="CHEBI:29108"/>
    </cofactor>
    <text evidence="5">Binds 1 Ca(2+) ion per heterodimer.</text>
</comment>
<comment type="cofactor">
    <cofactor evidence="5">
        <name>heme b</name>
        <dbReference type="ChEBI" id="CHEBI:60344"/>
    </cofactor>
    <text evidence="5">Binds 1 heme b (iron(II)-protoporphyrin IX) group covalently per heterodimer.</text>
</comment>
<comment type="pathway">
    <text>Hormone biosynthesis; thyroid hormone biosynthesis.</text>
</comment>
<comment type="subunit">
    <text evidence="1">Interacts with DUOX1, DUOX2 and CYBA.</text>
</comment>
<comment type="subcellular location">
    <subcellularLocation>
        <location evidence="1">Membrane</location>
        <topology evidence="1">Single-pass type I membrane protein</topology>
    </subcellularLocation>
</comment>
<comment type="PTM">
    <text evidence="1">Heme is covalently bound through a H(2)O(2)-dependent autocatalytic process. Heme insertion is important for the delivery of protein at the cell surface (By similarity).</text>
</comment>
<comment type="PTM">
    <text evidence="1">Cleaved in its N-terminal part.</text>
</comment>
<comment type="similarity">
    <text evidence="5">Belongs to the peroxidase family. XPO subfamily.</text>
</comment>
<sequence length="914" mass="101342">MRTLGAMAIMLVVMGTVIFLSFILRSRDILCGKTMKSHVISAVETSQLMVDHAVYNTMKRNLKKREVLSPAQLLSFFKLPESTSGAISRAAEIMETSIQVMKREQSQFSTDALSADILGTIANLSGCLPFMLPPRCPDTCLANKYRPITGACNNRDHPRWGASNTALARWLPPVYEDGFSQPKGWNPNFLYHGFPLPPVREVTRHLIQVSNEAVTEDDQYSDFLPVWGQYIDHDIALTPQSTSTAAFWGGVDCQLTCENQNPCFPIQLPSNSSGTTACLPFYRSSAACGTGDQGALFGNLSAANPRQQMNGLTSFLDASTVYGSSPGVEKQLRNWSSSAGLLRVNTLHLDAGRAYLPFATAACAPEPGTPRTNRTPCFLAGDGRASEVPALAAVHTLWLREHNRLASAFKAINKHWSANTAYQEARKVVGALHQIITMRDYIPKILGPDAFRQYVGPYEGYNPTVNPTVSNIFSTAAFRFGHATVHPLVRRLNTDFQEHTELPRLQLRDVFFRPWRLIQEGGLDPIVRGLLARAAKLQVQGQLMNEELTERLFVLSNVGTLDLASLNLQRGRDHGLPDYNEWREFCGLSRLETPAELNKAIANRSMVNKIMDLYKHADNIDVWLGGLAEKFLPGARTGPLFACIIGKQMKALRDGDRFWWENTNVFTDAQRQELEKHSLPRVICDNTGLTRVPVDAFRIGKFPQDFESCEDIPSMDLELWRETFPQDDKCVFPEEVDNGNFVHCEESGKLVLVYSCFHGYKLQGQEQVTCTQKGWDSEPPVCKDVNECADLTHPPCHPSAQCKNTKGSFQCVCTDPYVLGEDEKTCIDSGRLPRASWVSIALGALLIGGLASLTWIVICRWTHADKKATLPITERVTTQSGCRKSQGRGISPHKAAAQDTGQEPASGSRVLLCE</sequence>
<name>PERT_MOUSE</name>
<gene>
    <name type="primary">Tpo</name>
</gene>
<accession>P35419</accession>
<accession>Q8C8B1</accession>
<dbReference type="EC" id="1.11.1.8" evidence="2"/>
<dbReference type="EMBL" id="X60703">
    <property type="protein sequence ID" value="CAA43114.1"/>
    <property type="molecule type" value="mRNA"/>
</dbReference>
<dbReference type="EMBL" id="AK047843">
    <property type="protein sequence ID" value="BAC33171.1"/>
    <property type="molecule type" value="mRNA"/>
</dbReference>
<dbReference type="CCDS" id="CCDS25857.1"/>
<dbReference type="PIR" id="JN0550">
    <property type="entry name" value="JN0550"/>
</dbReference>
<dbReference type="RefSeq" id="NP_033443.1">
    <property type="nucleotide sequence ID" value="NM_009417.3"/>
</dbReference>
<dbReference type="SMR" id="P35419"/>
<dbReference type="FunCoup" id="P35419">
    <property type="interactions" value="69"/>
</dbReference>
<dbReference type="STRING" id="10090.ENSMUSP00000021005"/>
<dbReference type="PeroxiBase" id="3345">
    <property type="entry name" value="MmTPO"/>
</dbReference>
<dbReference type="GlyCosmos" id="P35419">
    <property type="glycosylation" value="5 sites, No reported glycans"/>
</dbReference>
<dbReference type="GlyGen" id="P35419">
    <property type="glycosylation" value="5 sites"/>
</dbReference>
<dbReference type="iPTMnet" id="P35419"/>
<dbReference type="PhosphoSitePlus" id="P35419"/>
<dbReference type="PaxDb" id="10090-ENSMUSP00000021005"/>
<dbReference type="ProteomicsDB" id="288126"/>
<dbReference type="Antibodypedia" id="2364">
    <property type="antibodies" value="685 antibodies from 34 providers"/>
</dbReference>
<dbReference type="DNASU" id="22018"/>
<dbReference type="Ensembl" id="ENSMUST00000021005.15">
    <property type="protein sequence ID" value="ENSMUSP00000021005.9"/>
    <property type="gene ID" value="ENSMUSG00000020673.15"/>
</dbReference>
<dbReference type="GeneID" id="22018"/>
<dbReference type="KEGG" id="mmu:22018"/>
<dbReference type="UCSC" id="uc007ngo.1">
    <property type="organism name" value="mouse"/>
</dbReference>
<dbReference type="AGR" id="MGI:98813"/>
<dbReference type="CTD" id="7173"/>
<dbReference type="MGI" id="MGI:98813">
    <property type="gene designation" value="Tpo"/>
</dbReference>
<dbReference type="VEuPathDB" id="HostDB:ENSMUSG00000020673"/>
<dbReference type="eggNOG" id="KOG2408">
    <property type="taxonomic scope" value="Eukaryota"/>
</dbReference>
<dbReference type="GeneTree" id="ENSGT00940000158104"/>
<dbReference type="HOGENOM" id="CLU_006087_1_0_1"/>
<dbReference type="InParanoid" id="P35419"/>
<dbReference type="OMA" id="FMAGDTR"/>
<dbReference type="OrthoDB" id="823504at2759"/>
<dbReference type="PhylomeDB" id="P35419"/>
<dbReference type="TreeFam" id="TF314316"/>
<dbReference type="Reactome" id="R-MMU-209968">
    <property type="pathway name" value="Thyroxine biosynthesis"/>
</dbReference>
<dbReference type="UniPathway" id="UPA00194"/>
<dbReference type="BioGRID-ORCS" id="22018">
    <property type="hits" value="3 hits in 76 CRISPR screens"/>
</dbReference>
<dbReference type="ChiTaRS" id="Tpo">
    <property type="organism name" value="mouse"/>
</dbReference>
<dbReference type="PRO" id="PR:P35419"/>
<dbReference type="Proteomes" id="UP000000589">
    <property type="component" value="Chromosome 12"/>
</dbReference>
<dbReference type="RNAct" id="P35419">
    <property type="molecule type" value="protein"/>
</dbReference>
<dbReference type="Bgee" id="ENSMUSG00000020673">
    <property type="expression patterns" value="Expressed in trachea and 16 other cell types or tissues"/>
</dbReference>
<dbReference type="ExpressionAtlas" id="P35419">
    <property type="expression patterns" value="baseline and differential"/>
</dbReference>
<dbReference type="GO" id="GO:0016020">
    <property type="term" value="C:membrane"/>
    <property type="evidence" value="ECO:0007669"/>
    <property type="project" value="UniProtKB-SubCell"/>
</dbReference>
<dbReference type="GO" id="GO:0005739">
    <property type="term" value="C:mitochondrion"/>
    <property type="evidence" value="ECO:0007005"/>
    <property type="project" value="MGI"/>
</dbReference>
<dbReference type="GO" id="GO:0005509">
    <property type="term" value="F:calcium ion binding"/>
    <property type="evidence" value="ECO:0007669"/>
    <property type="project" value="InterPro"/>
</dbReference>
<dbReference type="GO" id="GO:0020037">
    <property type="term" value="F:heme binding"/>
    <property type="evidence" value="ECO:0007669"/>
    <property type="project" value="InterPro"/>
</dbReference>
<dbReference type="GO" id="GO:0004447">
    <property type="term" value="F:iodide peroxidase activity"/>
    <property type="evidence" value="ECO:0007669"/>
    <property type="project" value="UniProtKB-EC"/>
</dbReference>
<dbReference type="GO" id="GO:0035162">
    <property type="term" value="P:embryonic hemopoiesis"/>
    <property type="evidence" value="ECO:0007669"/>
    <property type="project" value="Ensembl"/>
</dbReference>
<dbReference type="GO" id="GO:0042446">
    <property type="term" value="P:hormone biosynthetic process"/>
    <property type="evidence" value="ECO:0007669"/>
    <property type="project" value="UniProtKB-KW"/>
</dbReference>
<dbReference type="GO" id="GO:0042744">
    <property type="term" value="P:hydrogen peroxide catabolic process"/>
    <property type="evidence" value="ECO:0007669"/>
    <property type="project" value="UniProtKB-KW"/>
</dbReference>
<dbReference type="GO" id="GO:0006979">
    <property type="term" value="P:response to oxidative stress"/>
    <property type="evidence" value="ECO:0007669"/>
    <property type="project" value="InterPro"/>
</dbReference>
<dbReference type="GO" id="GO:0006590">
    <property type="term" value="P:thyroid hormone generation"/>
    <property type="evidence" value="ECO:0007669"/>
    <property type="project" value="UniProtKB-UniPathway"/>
</dbReference>
<dbReference type="CDD" id="cd00033">
    <property type="entry name" value="CCP"/>
    <property type="match status" value="1"/>
</dbReference>
<dbReference type="CDD" id="cd00054">
    <property type="entry name" value="EGF_CA"/>
    <property type="match status" value="1"/>
</dbReference>
<dbReference type="CDD" id="cd09825">
    <property type="entry name" value="thyroid_peroxidase"/>
    <property type="match status" value="1"/>
</dbReference>
<dbReference type="FunFam" id="1.10.640.10:FF:000010">
    <property type="entry name" value="Thyroid peroxidase"/>
    <property type="match status" value="1"/>
</dbReference>
<dbReference type="FunFam" id="1.10.640.10:FF:000013">
    <property type="entry name" value="Thyroid peroxidase"/>
    <property type="match status" value="1"/>
</dbReference>
<dbReference type="FunFam" id="2.10.70.10:FF:000059">
    <property type="entry name" value="Thyroid peroxidase"/>
    <property type="match status" value="1"/>
</dbReference>
<dbReference type="FunFam" id="2.10.25.10:FF:000452">
    <property type="entry name" value="thyroid peroxidase"/>
    <property type="match status" value="1"/>
</dbReference>
<dbReference type="Gene3D" id="2.10.70.10">
    <property type="entry name" value="Complement Module, domain 1"/>
    <property type="match status" value="1"/>
</dbReference>
<dbReference type="Gene3D" id="1.10.640.10">
    <property type="entry name" value="Haem peroxidase domain superfamily, animal type"/>
    <property type="match status" value="1"/>
</dbReference>
<dbReference type="Gene3D" id="2.10.25.10">
    <property type="entry name" value="Laminin"/>
    <property type="match status" value="1"/>
</dbReference>
<dbReference type="InterPro" id="IPR001881">
    <property type="entry name" value="EGF-like_Ca-bd_dom"/>
</dbReference>
<dbReference type="InterPro" id="IPR000742">
    <property type="entry name" value="EGF-like_dom"/>
</dbReference>
<dbReference type="InterPro" id="IPR000152">
    <property type="entry name" value="EGF-type_Asp/Asn_hydroxyl_site"/>
</dbReference>
<dbReference type="InterPro" id="IPR018097">
    <property type="entry name" value="EGF_Ca-bd_CS"/>
</dbReference>
<dbReference type="InterPro" id="IPR019791">
    <property type="entry name" value="Haem_peroxidase_animal"/>
</dbReference>
<dbReference type="InterPro" id="IPR010255">
    <property type="entry name" value="Haem_peroxidase_sf"/>
</dbReference>
<dbReference type="InterPro" id="IPR037120">
    <property type="entry name" value="Haem_peroxidase_sf_animal"/>
</dbReference>
<dbReference type="InterPro" id="IPR049883">
    <property type="entry name" value="NOTCH1_EGF-like"/>
</dbReference>
<dbReference type="InterPro" id="IPR035976">
    <property type="entry name" value="Sushi/SCR/CCP_sf"/>
</dbReference>
<dbReference type="InterPro" id="IPR000436">
    <property type="entry name" value="Sushi_SCR_CCP_dom"/>
</dbReference>
<dbReference type="InterPro" id="IPR029589">
    <property type="entry name" value="TPO"/>
</dbReference>
<dbReference type="PANTHER" id="PTHR11475">
    <property type="entry name" value="OXIDASE/PEROXIDASE"/>
    <property type="match status" value="1"/>
</dbReference>
<dbReference type="PANTHER" id="PTHR11475:SF60">
    <property type="entry name" value="THYROID PEROXIDASE"/>
    <property type="match status" value="1"/>
</dbReference>
<dbReference type="Pfam" id="PF03098">
    <property type="entry name" value="An_peroxidase"/>
    <property type="match status" value="1"/>
</dbReference>
<dbReference type="Pfam" id="PF07645">
    <property type="entry name" value="EGF_CA"/>
    <property type="match status" value="1"/>
</dbReference>
<dbReference type="Pfam" id="PF00084">
    <property type="entry name" value="Sushi"/>
    <property type="match status" value="1"/>
</dbReference>
<dbReference type="PRINTS" id="PR00457">
    <property type="entry name" value="ANPEROXIDASE"/>
</dbReference>
<dbReference type="SMART" id="SM00032">
    <property type="entry name" value="CCP"/>
    <property type="match status" value="1"/>
</dbReference>
<dbReference type="SMART" id="SM00181">
    <property type="entry name" value="EGF"/>
    <property type="match status" value="1"/>
</dbReference>
<dbReference type="SMART" id="SM00179">
    <property type="entry name" value="EGF_CA"/>
    <property type="match status" value="1"/>
</dbReference>
<dbReference type="SUPFAM" id="SSF57535">
    <property type="entry name" value="Complement control module/SCR domain"/>
    <property type="match status" value="1"/>
</dbReference>
<dbReference type="SUPFAM" id="SSF57196">
    <property type="entry name" value="EGF/Laminin"/>
    <property type="match status" value="1"/>
</dbReference>
<dbReference type="SUPFAM" id="SSF48113">
    <property type="entry name" value="Heme-dependent peroxidases"/>
    <property type="match status" value="1"/>
</dbReference>
<dbReference type="PROSITE" id="PS00010">
    <property type="entry name" value="ASX_HYDROXYL"/>
    <property type="match status" value="1"/>
</dbReference>
<dbReference type="PROSITE" id="PS01186">
    <property type="entry name" value="EGF_2"/>
    <property type="match status" value="1"/>
</dbReference>
<dbReference type="PROSITE" id="PS50026">
    <property type="entry name" value="EGF_3"/>
    <property type="match status" value="1"/>
</dbReference>
<dbReference type="PROSITE" id="PS01187">
    <property type="entry name" value="EGF_CA"/>
    <property type="match status" value="1"/>
</dbReference>
<dbReference type="PROSITE" id="PS00435">
    <property type="entry name" value="PEROXIDASE_1"/>
    <property type="match status" value="1"/>
</dbReference>
<dbReference type="PROSITE" id="PS50292">
    <property type="entry name" value="PEROXIDASE_3"/>
    <property type="match status" value="1"/>
</dbReference>
<dbReference type="PROSITE" id="PS50923">
    <property type="entry name" value="SUSHI"/>
    <property type="match status" value="1"/>
</dbReference>
<organism>
    <name type="scientific">Mus musculus</name>
    <name type="common">Mouse</name>
    <dbReference type="NCBI Taxonomy" id="10090"/>
    <lineage>
        <taxon>Eukaryota</taxon>
        <taxon>Metazoa</taxon>
        <taxon>Chordata</taxon>
        <taxon>Craniata</taxon>
        <taxon>Vertebrata</taxon>
        <taxon>Euteleostomi</taxon>
        <taxon>Mammalia</taxon>
        <taxon>Eutheria</taxon>
        <taxon>Euarchontoglires</taxon>
        <taxon>Glires</taxon>
        <taxon>Rodentia</taxon>
        <taxon>Myomorpha</taxon>
        <taxon>Muroidea</taxon>
        <taxon>Muridae</taxon>
        <taxon>Murinae</taxon>
        <taxon>Mus</taxon>
        <taxon>Mus</taxon>
    </lineage>
</organism>
<keyword id="KW-0106">Calcium</keyword>
<keyword id="KW-1015">Disulfide bond</keyword>
<keyword id="KW-0245">EGF-like domain</keyword>
<keyword id="KW-0325">Glycoprotein</keyword>
<keyword id="KW-0349">Heme</keyword>
<keyword id="KW-0376">Hydrogen peroxide</keyword>
<keyword id="KW-0408">Iron</keyword>
<keyword id="KW-0472">Membrane</keyword>
<keyword id="KW-0479">Metal-binding</keyword>
<keyword id="KW-0560">Oxidoreductase</keyword>
<keyword id="KW-0575">Peroxidase</keyword>
<keyword id="KW-1185">Reference proteome</keyword>
<keyword id="KW-0732">Signal</keyword>
<keyword id="KW-0768">Sushi</keyword>
<keyword id="KW-0893">Thyroid hormones biosynthesis</keyword>
<keyword id="KW-0812">Transmembrane</keyword>
<keyword id="KW-1133">Transmembrane helix</keyword>
<reference key="1">
    <citation type="journal article" date="1993" name="Gene">
        <title>Nucleotide sequence of the cDNA encoding mouse thyroid peroxidase.</title>
        <authorList>
            <person name="Kotani T."/>
            <person name="Umeki K."/>
            <person name="Yamamoto I."/>
            <person name="Takeuchi M."/>
            <person name="Takechi S."/>
            <person name="Nakayama T."/>
            <person name="Ohtaki S."/>
        </authorList>
    </citation>
    <scope>NUCLEOTIDE SEQUENCE [MRNA]</scope>
    <source>
        <strain>C57BL/6J</strain>
        <tissue>Thyroid</tissue>
    </source>
</reference>
<reference key="2">
    <citation type="journal article" date="2005" name="Science">
        <title>The transcriptional landscape of the mammalian genome.</title>
        <authorList>
            <person name="Carninci P."/>
            <person name="Kasukawa T."/>
            <person name="Katayama S."/>
            <person name="Gough J."/>
            <person name="Frith M.C."/>
            <person name="Maeda N."/>
            <person name="Oyama R."/>
            <person name="Ravasi T."/>
            <person name="Lenhard B."/>
            <person name="Wells C."/>
            <person name="Kodzius R."/>
            <person name="Shimokawa K."/>
            <person name="Bajic V.B."/>
            <person name="Brenner S.E."/>
            <person name="Batalov S."/>
            <person name="Forrest A.R."/>
            <person name="Zavolan M."/>
            <person name="Davis M.J."/>
            <person name="Wilming L.G."/>
            <person name="Aidinis V."/>
            <person name="Allen J.E."/>
            <person name="Ambesi-Impiombato A."/>
            <person name="Apweiler R."/>
            <person name="Aturaliya R.N."/>
            <person name="Bailey T.L."/>
            <person name="Bansal M."/>
            <person name="Baxter L."/>
            <person name="Beisel K.W."/>
            <person name="Bersano T."/>
            <person name="Bono H."/>
            <person name="Chalk A.M."/>
            <person name="Chiu K.P."/>
            <person name="Choudhary V."/>
            <person name="Christoffels A."/>
            <person name="Clutterbuck D.R."/>
            <person name="Crowe M.L."/>
            <person name="Dalla E."/>
            <person name="Dalrymple B.P."/>
            <person name="de Bono B."/>
            <person name="Della Gatta G."/>
            <person name="di Bernardo D."/>
            <person name="Down T."/>
            <person name="Engstrom P."/>
            <person name="Fagiolini M."/>
            <person name="Faulkner G."/>
            <person name="Fletcher C.F."/>
            <person name="Fukushima T."/>
            <person name="Furuno M."/>
            <person name="Futaki S."/>
            <person name="Gariboldi M."/>
            <person name="Georgii-Hemming P."/>
            <person name="Gingeras T.R."/>
            <person name="Gojobori T."/>
            <person name="Green R.E."/>
            <person name="Gustincich S."/>
            <person name="Harbers M."/>
            <person name="Hayashi Y."/>
            <person name="Hensch T.K."/>
            <person name="Hirokawa N."/>
            <person name="Hill D."/>
            <person name="Huminiecki L."/>
            <person name="Iacono M."/>
            <person name="Ikeo K."/>
            <person name="Iwama A."/>
            <person name="Ishikawa T."/>
            <person name="Jakt M."/>
            <person name="Kanapin A."/>
            <person name="Katoh M."/>
            <person name="Kawasawa Y."/>
            <person name="Kelso J."/>
            <person name="Kitamura H."/>
            <person name="Kitano H."/>
            <person name="Kollias G."/>
            <person name="Krishnan S.P."/>
            <person name="Kruger A."/>
            <person name="Kummerfeld S.K."/>
            <person name="Kurochkin I.V."/>
            <person name="Lareau L.F."/>
            <person name="Lazarevic D."/>
            <person name="Lipovich L."/>
            <person name="Liu J."/>
            <person name="Liuni S."/>
            <person name="McWilliam S."/>
            <person name="Madan Babu M."/>
            <person name="Madera M."/>
            <person name="Marchionni L."/>
            <person name="Matsuda H."/>
            <person name="Matsuzawa S."/>
            <person name="Miki H."/>
            <person name="Mignone F."/>
            <person name="Miyake S."/>
            <person name="Morris K."/>
            <person name="Mottagui-Tabar S."/>
            <person name="Mulder N."/>
            <person name="Nakano N."/>
            <person name="Nakauchi H."/>
            <person name="Ng P."/>
            <person name="Nilsson R."/>
            <person name="Nishiguchi S."/>
            <person name="Nishikawa S."/>
            <person name="Nori F."/>
            <person name="Ohara O."/>
            <person name="Okazaki Y."/>
            <person name="Orlando V."/>
            <person name="Pang K.C."/>
            <person name="Pavan W.J."/>
            <person name="Pavesi G."/>
            <person name="Pesole G."/>
            <person name="Petrovsky N."/>
            <person name="Piazza S."/>
            <person name="Reed J."/>
            <person name="Reid J.F."/>
            <person name="Ring B.Z."/>
            <person name="Ringwald M."/>
            <person name="Rost B."/>
            <person name="Ruan Y."/>
            <person name="Salzberg S.L."/>
            <person name="Sandelin A."/>
            <person name="Schneider C."/>
            <person name="Schoenbach C."/>
            <person name="Sekiguchi K."/>
            <person name="Semple C.A."/>
            <person name="Seno S."/>
            <person name="Sessa L."/>
            <person name="Sheng Y."/>
            <person name="Shibata Y."/>
            <person name="Shimada H."/>
            <person name="Shimada K."/>
            <person name="Silva D."/>
            <person name="Sinclair B."/>
            <person name="Sperling S."/>
            <person name="Stupka E."/>
            <person name="Sugiura K."/>
            <person name="Sultana R."/>
            <person name="Takenaka Y."/>
            <person name="Taki K."/>
            <person name="Tammoja K."/>
            <person name="Tan S.L."/>
            <person name="Tang S."/>
            <person name="Taylor M.S."/>
            <person name="Tegner J."/>
            <person name="Teichmann S.A."/>
            <person name="Ueda H.R."/>
            <person name="van Nimwegen E."/>
            <person name="Verardo R."/>
            <person name="Wei C.L."/>
            <person name="Yagi K."/>
            <person name="Yamanishi H."/>
            <person name="Zabarovsky E."/>
            <person name="Zhu S."/>
            <person name="Zimmer A."/>
            <person name="Hide W."/>
            <person name="Bult C."/>
            <person name="Grimmond S.M."/>
            <person name="Teasdale R.D."/>
            <person name="Liu E.T."/>
            <person name="Brusic V."/>
            <person name="Quackenbush J."/>
            <person name="Wahlestedt C."/>
            <person name="Mattick J.S."/>
            <person name="Hume D.A."/>
            <person name="Kai C."/>
            <person name="Sasaki D."/>
            <person name="Tomaru Y."/>
            <person name="Fukuda S."/>
            <person name="Kanamori-Katayama M."/>
            <person name="Suzuki M."/>
            <person name="Aoki J."/>
            <person name="Arakawa T."/>
            <person name="Iida J."/>
            <person name="Imamura K."/>
            <person name="Itoh M."/>
            <person name="Kato T."/>
            <person name="Kawaji H."/>
            <person name="Kawagashira N."/>
            <person name="Kawashima T."/>
            <person name="Kojima M."/>
            <person name="Kondo S."/>
            <person name="Konno H."/>
            <person name="Nakano K."/>
            <person name="Ninomiya N."/>
            <person name="Nishio T."/>
            <person name="Okada M."/>
            <person name="Plessy C."/>
            <person name="Shibata K."/>
            <person name="Shiraki T."/>
            <person name="Suzuki S."/>
            <person name="Tagami M."/>
            <person name="Waki K."/>
            <person name="Watahiki A."/>
            <person name="Okamura-Oho Y."/>
            <person name="Suzuki H."/>
            <person name="Kawai J."/>
            <person name="Hayashizaki Y."/>
        </authorList>
    </citation>
    <scope>NUCLEOTIDE SEQUENCE [LARGE SCALE MRNA]</scope>
    <source>
        <strain>C57BL/6J</strain>
        <tissue>Head</tissue>
    </source>
</reference>